<evidence type="ECO:0000255" key="1">
    <source>
        <dbReference type="PROSITE-ProRule" id="PRU00042"/>
    </source>
</evidence>
<evidence type="ECO:0000255" key="2">
    <source>
        <dbReference type="PROSITE-ProRule" id="PRU00119"/>
    </source>
</evidence>
<evidence type="ECO:0000303" key="3">
    <source>
    </source>
</evidence>
<evidence type="ECO:0000303" key="4">
    <source>
    </source>
</evidence>
<evidence type="ECO:0000305" key="5"/>
<reference key="1">
    <citation type="journal article" date="2004" name="Nat. Genet.">
        <title>Complete sequencing and characterization of 21,243 full-length human cDNAs.</title>
        <authorList>
            <person name="Ota T."/>
            <person name="Suzuki Y."/>
            <person name="Nishikawa T."/>
            <person name="Otsuki T."/>
            <person name="Sugiyama T."/>
            <person name="Irie R."/>
            <person name="Wakamatsu A."/>
            <person name="Hayashi K."/>
            <person name="Sato H."/>
            <person name="Nagai K."/>
            <person name="Kimura K."/>
            <person name="Makita H."/>
            <person name="Sekine M."/>
            <person name="Obayashi M."/>
            <person name="Nishi T."/>
            <person name="Shibahara T."/>
            <person name="Tanaka T."/>
            <person name="Ishii S."/>
            <person name="Yamamoto J."/>
            <person name="Saito K."/>
            <person name="Kawai Y."/>
            <person name="Isono Y."/>
            <person name="Nakamura Y."/>
            <person name="Nagahari K."/>
            <person name="Murakami K."/>
            <person name="Yasuda T."/>
            <person name="Iwayanagi T."/>
            <person name="Wagatsuma M."/>
            <person name="Shiratori A."/>
            <person name="Sudo H."/>
            <person name="Hosoiri T."/>
            <person name="Kaku Y."/>
            <person name="Kodaira H."/>
            <person name="Kondo H."/>
            <person name="Sugawara M."/>
            <person name="Takahashi M."/>
            <person name="Kanda K."/>
            <person name="Yokoi T."/>
            <person name="Furuya T."/>
            <person name="Kikkawa E."/>
            <person name="Omura Y."/>
            <person name="Abe K."/>
            <person name="Kamihara K."/>
            <person name="Katsuta N."/>
            <person name="Sato K."/>
            <person name="Tanikawa M."/>
            <person name="Yamazaki M."/>
            <person name="Ninomiya K."/>
            <person name="Ishibashi T."/>
            <person name="Yamashita H."/>
            <person name="Murakawa K."/>
            <person name="Fujimori K."/>
            <person name="Tanai H."/>
            <person name="Kimata M."/>
            <person name="Watanabe M."/>
            <person name="Hiraoka S."/>
            <person name="Chiba Y."/>
            <person name="Ishida S."/>
            <person name="Ono Y."/>
            <person name="Takiguchi S."/>
            <person name="Watanabe S."/>
            <person name="Yosida M."/>
            <person name="Hotuta T."/>
            <person name="Kusano J."/>
            <person name="Kanehori K."/>
            <person name="Takahashi-Fujii A."/>
            <person name="Hara H."/>
            <person name="Tanase T.-O."/>
            <person name="Nomura Y."/>
            <person name="Togiya S."/>
            <person name="Komai F."/>
            <person name="Hara R."/>
            <person name="Takeuchi K."/>
            <person name="Arita M."/>
            <person name="Imose N."/>
            <person name="Musashino K."/>
            <person name="Yuuki H."/>
            <person name="Oshima A."/>
            <person name="Sasaki N."/>
            <person name="Aotsuka S."/>
            <person name="Yoshikawa Y."/>
            <person name="Matsunawa H."/>
            <person name="Ichihara T."/>
            <person name="Shiohata N."/>
            <person name="Sano S."/>
            <person name="Moriya S."/>
            <person name="Momiyama H."/>
            <person name="Satoh N."/>
            <person name="Takami S."/>
            <person name="Terashima Y."/>
            <person name="Suzuki O."/>
            <person name="Nakagawa S."/>
            <person name="Senoh A."/>
            <person name="Mizoguchi H."/>
            <person name="Goto Y."/>
            <person name="Shimizu F."/>
            <person name="Wakebe H."/>
            <person name="Hishigaki H."/>
            <person name="Watanabe T."/>
            <person name="Sugiyama A."/>
            <person name="Takemoto M."/>
            <person name="Kawakami B."/>
            <person name="Yamazaki M."/>
            <person name="Watanabe K."/>
            <person name="Kumagai A."/>
            <person name="Itakura S."/>
            <person name="Fukuzumi Y."/>
            <person name="Fujimori Y."/>
            <person name="Komiyama M."/>
            <person name="Tashiro H."/>
            <person name="Tanigami A."/>
            <person name="Fujiwara T."/>
            <person name="Ono T."/>
            <person name="Yamada K."/>
            <person name="Fujii Y."/>
            <person name="Ozaki K."/>
            <person name="Hirao M."/>
            <person name="Ohmori Y."/>
            <person name="Kawabata A."/>
            <person name="Hikiji T."/>
            <person name="Kobatake N."/>
            <person name="Inagaki H."/>
            <person name="Ikema Y."/>
            <person name="Okamoto S."/>
            <person name="Okitani R."/>
            <person name="Kawakami T."/>
            <person name="Noguchi S."/>
            <person name="Itoh T."/>
            <person name="Shigeta K."/>
            <person name="Senba T."/>
            <person name="Matsumura K."/>
            <person name="Nakajima Y."/>
            <person name="Mizuno T."/>
            <person name="Morinaga M."/>
            <person name="Sasaki M."/>
            <person name="Togashi T."/>
            <person name="Oyama M."/>
            <person name="Hata H."/>
            <person name="Watanabe M."/>
            <person name="Komatsu T."/>
            <person name="Mizushima-Sugano J."/>
            <person name="Satoh T."/>
            <person name="Shirai Y."/>
            <person name="Takahashi Y."/>
            <person name="Nakagawa K."/>
            <person name="Okumura K."/>
            <person name="Nagase T."/>
            <person name="Nomura N."/>
            <person name="Kikuchi H."/>
            <person name="Masuho Y."/>
            <person name="Yamashita R."/>
            <person name="Nakai K."/>
            <person name="Yada T."/>
            <person name="Nakamura Y."/>
            <person name="Ohara O."/>
            <person name="Isogai T."/>
            <person name="Sugano S."/>
        </authorList>
    </citation>
    <scope>NUCLEOTIDE SEQUENCE [LARGE SCALE MRNA] (ISOFORMS 1 AND 2)</scope>
    <source>
        <tissue>Teratocarcinoma</tissue>
    </source>
</reference>
<reference key="2">
    <citation type="journal article" date="2007" name="BMC Genomics">
        <title>The full-ORF clone resource of the German cDNA consortium.</title>
        <authorList>
            <person name="Bechtel S."/>
            <person name="Rosenfelder H."/>
            <person name="Duda A."/>
            <person name="Schmidt C.P."/>
            <person name="Ernst U."/>
            <person name="Wellenreuther R."/>
            <person name="Mehrle A."/>
            <person name="Schuster C."/>
            <person name="Bahr A."/>
            <person name="Bloecker H."/>
            <person name="Heubner D."/>
            <person name="Hoerlein A."/>
            <person name="Michel G."/>
            <person name="Wedler H."/>
            <person name="Koehrer K."/>
            <person name="Ottenwaelder B."/>
            <person name="Poustka A."/>
            <person name="Wiemann S."/>
            <person name="Schupp I."/>
        </authorList>
    </citation>
    <scope>NUCLEOTIDE SEQUENCE [LARGE SCALE MRNA] (ISOFORM 1)</scope>
    <source>
        <tissue>Testis</tissue>
    </source>
</reference>
<reference key="3">
    <citation type="journal article" date="2004" name="Nature">
        <title>The DNA sequence and biology of human chromosome 19.</title>
        <authorList>
            <person name="Grimwood J."/>
            <person name="Gordon L.A."/>
            <person name="Olsen A.S."/>
            <person name="Terry A."/>
            <person name="Schmutz J."/>
            <person name="Lamerdin J.E."/>
            <person name="Hellsten U."/>
            <person name="Goodstein D."/>
            <person name="Couronne O."/>
            <person name="Tran-Gyamfi M."/>
            <person name="Aerts A."/>
            <person name="Altherr M."/>
            <person name="Ashworth L."/>
            <person name="Bajorek E."/>
            <person name="Black S."/>
            <person name="Branscomb E."/>
            <person name="Caenepeel S."/>
            <person name="Carrano A.V."/>
            <person name="Caoile C."/>
            <person name="Chan Y.M."/>
            <person name="Christensen M."/>
            <person name="Cleland C.A."/>
            <person name="Copeland A."/>
            <person name="Dalin E."/>
            <person name="Dehal P."/>
            <person name="Denys M."/>
            <person name="Detter J.C."/>
            <person name="Escobar J."/>
            <person name="Flowers D."/>
            <person name="Fotopulos D."/>
            <person name="Garcia C."/>
            <person name="Georgescu A.M."/>
            <person name="Glavina T."/>
            <person name="Gomez M."/>
            <person name="Gonzales E."/>
            <person name="Groza M."/>
            <person name="Hammon N."/>
            <person name="Hawkins T."/>
            <person name="Haydu L."/>
            <person name="Ho I."/>
            <person name="Huang W."/>
            <person name="Israni S."/>
            <person name="Jett J."/>
            <person name="Kadner K."/>
            <person name="Kimball H."/>
            <person name="Kobayashi A."/>
            <person name="Larionov V."/>
            <person name="Leem S.-H."/>
            <person name="Lopez F."/>
            <person name="Lou Y."/>
            <person name="Lowry S."/>
            <person name="Malfatti S."/>
            <person name="Martinez D."/>
            <person name="McCready P.M."/>
            <person name="Medina C."/>
            <person name="Morgan J."/>
            <person name="Nelson K."/>
            <person name="Nolan M."/>
            <person name="Ovcharenko I."/>
            <person name="Pitluck S."/>
            <person name="Pollard M."/>
            <person name="Popkie A.P."/>
            <person name="Predki P."/>
            <person name="Quan G."/>
            <person name="Ramirez L."/>
            <person name="Rash S."/>
            <person name="Retterer J."/>
            <person name="Rodriguez A."/>
            <person name="Rogers S."/>
            <person name="Salamov A."/>
            <person name="Salazar A."/>
            <person name="She X."/>
            <person name="Smith D."/>
            <person name="Slezak T."/>
            <person name="Solovyev V."/>
            <person name="Thayer N."/>
            <person name="Tice H."/>
            <person name="Tsai M."/>
            <person name="Ustaszewska A."/>
            <person name="Vo N."/>
            <person name="Wagner M."/>
            <person name="Wheeler J."/>
            <person name="Wu K."/>
            <person name="Xie G."/>
            <person name="Yang J."/>
            <person name="Dubchak I."/>
            <person name="Furey T.S."/>
            <person name="DeJong P."/>
            <person name="Dickson M."/>
            <person name="Gordon D."/>
            <person name="Eichler E.E."/>
            <person name="Pennacchio L.A."/>
            <person name="Richardson P."/>
            <person name="Stubbs L."/>
            <person name="Rokhsar D.S."/>
            <person name="Myers R.M."/>
            <person name="Rubin E.M."/>
            <person name="Lucas S.M."/>
        </authorList>
    </citation>
    <scope>NUCLEOTIDE SEQUENCE [LARGE SCALE GENOMIC DNA]</scope>
</reference>
<reference key="4">
    <citation type="submission" date="2005-07" db="EMBL/GenBank/DDBJ databases">
        <authorList>
            <person name="Mural R.J."/>
            <person name="Istrail S."/>
            <person name="Sutton G."/>
            <person name="Florea L."/>
            <person name="Halpern A.L."/>
            <person name="Mobarry C.M."/>
            <person name="Lippert R."/>
            <person name="Walenz B."/>
            <person name="Shatkay H."/>
            <person name="Dew I."/>
            <person name="Miller J.R."/>
            <person name="Flanigan M.J."/>
            <person name="Edwards N.J."/>
            <person name="Bolanos R."/>
            <person name="Fasulo D."/>
            <person name="Halldorsson B.V."/>
            <person name="Hannenhalli S."/>
            <person name="Turner R."/>
            <person name="Yooseph S."/>
            <person name="Lu F."/>
            <person name="Nusskern D.R."/>
            <person name="Shue B.C."/>
            <person name="Zheng X.H."/>
            <person name="Zhong F."/>
            <person name="Delcher A.L."/>
            <person name="Huson D.H."/>
            <person name="Kravitz S.A."/>
            <person name="Mouchard L."/>
            <person name="Reinert K."/>
            <person name="Remington K.A."/>
            <person name="Clark A.G."/>
            <person name="Waterman M.S."/>
            <person name="Eichler E.E."/>
            <person name="Adams M.D."/>
            <person name="Hunkapiller M.W."/>
            <person name="Myers E.W."/>
            <person name="Venter J.C."/>
        </authorList>
    </citation>
    <scope>NUCLEOTIDE SEQUENCE [LARGE SCALE GENOMIC DNA]</scope>
</reference>
<reference key="5">
    <citation type="journal article" date="2004" name="Genome Res.">
        <title>The status, quality, and expansion of the NIH full-length cDNA project: the Mammalian Gene Collection (MGC).</title>
        <authorList>
            <consortium name="The MGC Project Team"/>
        </authorList>
    </citation>
    <scope>NUCLEOTIDE SEQUENCE [LARGE SCALE MRNA] (ISOFORM 3)</scope>
    <source>
        <tissue>Lung</tissue>
        <tissue>Prostate</tissue>
    </source>
</reference>
<accession>Q68DY1</accession>
<accession>Q8N8T4</accession>
<accession>Q96QM1</accession>
<gene>
    <name type="primary">ZNF626</name>
</gene>
<organism>
    <name type="scientific">Homo sapiens</name>
    <name type="common">Human</name>
    <dbReference type="NCBI Taxonomy" id="9606"/>
    <lineage>
        <taxon>Eukaryota</taxon>
        <taxon>Metazoa</taxon>
        <taxon>Chordata</taxon>
        <taxon>Craniata</taxon>
        <taxon>Vertebrata</taxon>
        <taxon>Euteleostomi</taxon>
        <taxon>Mammalia</taxon>
        <taxon>Eutheria</taxon>
        <taxon>Euarchontoglires</taxon>
        <taxon>Primates</taxon>
        <taxon>Haplorrhini</taxon>
        <taxon>Catarrhini</taxon>
        <taxon>Hominidae</taxon>
        <taxon>Homo</taxon>
    </lineage>
</organism>
<feature type="chain" id="PRO_0000270994" description="Zinc finger protein 626">
    <location>
        <begin position="1"/>
        <end position="528"/>
    </location>
</feature>
<feature type="domain" description="KRAB" evidence="2">
    <location>
        <begin position="4"/>
        <end position="75"/>
    </location>
</feature>
<feature type="zinc finger region" description="C2H2-type 1; degenerate" evidence="1">
    <location>
        <begin position="173"/>
        <end position="195"/>
    </location>
</feature>
<feature type="zinc finger region" description="C2H2-type 2" evidence="1">
    <location>
        <begin position="201"/>
        <end position="223"/>
    </location>
</feature>
<feature type="zinc finger region" description="C2H2-type 3" evidence="1">
    <location>
        <begin position="229"/>
        <end position="251"/>
    </location>
</feature>
<feature type="zinc finger region" description="C2H2-type 4" evidence="1">
    <location>
        <begin position="257"/>
        <end position="279"/>
    </location>
</feature>
<feature type="zinc finger region" description="C2H2-type 5" evidence="1">
    <location>
        <begin position="285"/>
        <end position="307"/>
    </location>
</feature>
<feature type="zinc finger region" description="C2H2-type 6" evidence="1">
    <location>
        <begin position="313"/>
        <end position="335"/>
    </location>
</feature>
<feature type="zinc finger region" description="C2H2-type 7" evidence="1">
    <location>
        <begin position="341"/>
        <end position="363"/>
    </location>
</feature>
<feature type="zinc finger region" description="C2H2-type 8" evidence="1">
    <location>
        <begin position="369"/>
        <end position="391"/>
    </location>
</feature>
<feature type="zinc finger region" description="C2H2-type 9" evidence="1">
    <location>
        <begin position="397"/>
        <end position="419"/>
    </location>
</feature>
<feature type="zinc finger region" description="C2H2-type 10" evidence="1">
    <location>
        <begin position="425"/>
        <end position="447"/>
    </location>
</feature>
<feature type="zinc finger region" description="C2H2-type 11" evidence="1">
    <location>
        <begin position="453"/>
        <end position="475"/>
    </location>
</feature>
<feature type="zinc finger region" description="C2H2-type 12; degenerate" evidence="1">
    <location>
        <begin position="481"/>
        <end position="503"/>
    </location>
</feature>
<feature type="splice variant" id="VSP_022263" description="In isoform 2." evidence="3">
    <location>
        <begin position="1"/>
        <end position="76"/>
    </location>
</feature>
<feature type="splice variant" id="VSP_043270" description="In isoform 3." evidence="4">
    <original>MCSHFAQDLWPEQSMK</original>
    <variation>SFLQVHSESQSPLHDI</variation>
    <location>
        <begin position="77"/>
        <end position="92"/>
    </location>
</feature>
<feature type="splice variant" id="VSP_043271" description="In isoform 3." evidence="4">
    <location>
        <begin position="93"/>
        <end position="528"/>
    </location>
</feature>
<feature type="sequence variant" id="VAR_047338" description="In dbSNP:rs8106117.">
    <original>M</original>
    <variation>T</variation>
    <location>
        <position position="65"/>
    </location>
</feature>
<feature type="sequence variant" id="VAR_029837" description="In dbSNP:rs3209058.">
    <original>N</original>
    <variation>H</variation>
    <location>
        <position position="68"/>
    </location>
</feature>
<feature type="sequence variant" id="VAR_047339" description="In dbSNP:rs8111015.">
    <original>Q</original>
    <variation>E</variation>
    <location>
        <position position="89"/>
    </location>
</feature>
<feature type="sequence variant" id="VAR_047340" description="In dbSNP:rs8110802.">
    <original>S</original>
    <variation>N</variation>
    <location>
        <position position="90"/>
    </location>
</feature>
<feature type="sequence variant" id="VAR_047341" description="In dbSNP:rs4809072.">
    <original>C</original>
    <variation>Y</variation>
    <location>
        <position position="464"/>
    </location>
</feature>
<feature type="sequence variant" id="VAR_047342" description="In dbSNP:rs10408597.">
    <original>E</original>
    <variation>K</variation>
    <location>
        <position position="500"/>
    </location>
</feature>
<proteinExistence type="evidence at transcript level"/>
<name>ZN626_HUMAN</name>
<sequence length="528" mass="60893">MGPLQFRDVAIEFSLEEWHCLDTAQRNLYRNVMLENYSNLVFLGITVSKPDLITCLEQGRKPLTMKRNEMIAKPSVMCSHFAQDLWPEQSMKDSFQKVVLRRYEKCEHDNLQLKKGCISVDECKVHKEGYNELNQCLTTTPRKICQCDKYVKVLHQFPNSNGQKRGHTGKKPFKYIECGKAFKQFSTLTTHKKIHTGGKPYKCEECGKAFNHSCSLTRHKKIHTGEKPYKCEECGKAFKHSSTLTTHKRNHTGEKPYKCDKCGKAFMSSSTLSKHEIIHTEKKPYKCEECGKAFNRSSTLTTHKIIHTGEKPYKCEECDKAFKYSYTLTTHKRIHTEDKPYKCEECGKAFKYSSTLTTHKRIHTGEKPYKCEECGKAFKRSSDLTTHKIIHTGEKPYKCEECGKAFKYSSNLTTHKKIHTGERPYKCEECGKAFNQSSILTTHRRIHTGEKFYKCEECGKAFKCSSNLTTHKKIHTGERPYKCEECGKAFNQSSILTTHERIILERNSTNVKNVAKPSSGPHTLLHIR</sequence>
<comment type="function">
    <text>May be involved in transcriptional regulation.</text>
</comment>
<comment type="subcellular location">
    <subcellularLocation>
        <location evidence="5">Nucleus</location>
    </subcellularLocation>
</comment>
<comment type="alternative products">
    <event type="alternative splicing"/>
    <isoform>
        <id>Q68DY1-1</id>
        <name>1</name>
        <sequence type="displayed"/>
    </isoform>
    <isoform>
        <id>Q68DY1-2</id>
        <name>2</name>
        <sequence type="described" ref="VSP_022263"/>
    </isoform>
    <isoform>
        <id>Q68DY1-3</id>
        <name>3</name>
        <sequence type="described" ref="VSP_043270 VSP_043271"/>
    </isoform>
</comment>
<comment type="similarity">
    <text evidence="5">Belongs to the krueppel C2H2-type zinc-finger protein family.</text>
</comment>
<comment type="sequence caution" evidence="5">
    <conflict type="miscellaneous discrepancy">
        <sequence resource="EMBL-CDS" id="BAC04729"/>
    </conflict>
    <text>Intron-exon boundaries of the last intron are not canonical, they have a CT-AG boundary.</text>
</comment>
<comment type="sequence caution" evidence="5">
    <conflict type="miscellaneous discrepancy">
        <sequence resource="EMBL-CDS" id="CAH18089"/>
    </conflict>
    <text>Intron-exon boundaries of the last intron are not canonical, they have a CT-AG boundary.</text>
</comment>
<dbReference type="EMBL" id="AK096221">
    <property type="protein sequence ID" value="BAC04729.1"/>
    <property type="status" value="ALT_SEQ"/>
    <property type="molecule type" value="mRNA"/>
</dbReference>
<dbReference type="EMBL" id="AK131567">
    <property type="status" value="NOT_ANNOTATED_CDS"/>
    <property type="molecule type" value="mRNA"/>
</dbReference>
<dbReference type="EMBL" id="CR749233">
    <property type="protein sequence ID" value="CAH18089.1"/>
    <property type="status" value="ALT_SEQ"/>
    <property type="molecule type" value="mRNA"/>
</dbReference>
<dbReference type="EMBL" id="AC010636">
    <property type="status" value="NOT_ANNOTATED_CDS"/>
    <property type="molecule type" value="Genomic_DNA"/>
</dbReference>
<dbReference type="EMBL" id="CH471106">
    <property type="protein sequence ID" value="EAW84879.1"/>
    <property type="molecule type" value="Genomic_DNA"/>
</dbReference>
<dbReference type="EMBL" id="BC007116">
    <property type="protein sequence ID" value="AAH07116.1"/>
    <property type="molecule type" value="mRNA"/>
</dbReference>
<dbReference type="EMBL" id="BC107803">
    <property type="protein sequence ID" value="AAI07804.1"/>
    <property type="molecule type" value="mRNA"/>
</dbReference>
<dbReference type="CCDS" id="CCDS32976.1">
    <molecule id="Q68DY1-3"/>
</dbReference>
<dbReference type="CCDS" id="CCDS42535.1">
    <molecule id="Q68DY1-1"/>
</dbReference>
<dbReference type="RefSeq" id="NP_001070143.1">
    <molecule id="Q68DY1-1"/>
    <property type="nucleotide sequence ID" value="NM_001076675.3"/>
</dbReference>
<dbReference type="RefSeq" id="NP_660340.1">
    <molecule id="Q68DY1-3"/>
    <property type="nucleotide sequence ID" value="NM_145297.4"/>
</dbReference>
<dbReference type="SMR" id="Q68DY1"/>
<dbReference type="BioGRID" id="128273">
    <property type="interactions" value="6"/>
</dbReference>
<dbReference type="FunCoup" id="Q68DY1">
    <property type="interactions" value="9"/>
</dbReference>
<dbReference type="IntAct" id="Q68DY1">
    <property type="interactions" value="3"/>
</dbReference>
<dbReference type="STRING" id="9606.ENSP00000469958"/>
<dbReference type="iPTMnet" id="Q68DY1"/>
<dbReference type="PhosphoSitePlus" id="Q68DY1"/>
<dbReference type="BioMuta" id="ZNF626"/>
<dbReference type="DMDM" id="215273916"/>
<dbReference type="jPOST" id="Q68DY1"/>
<dbReference type="MassIVE" id="Q68DY1"/>
<dbReference type="PaxDb" id="9606-ENSP00000469958"/>
<dbReference type="PeptideAtlas" id="Q68DY1"/>
<dbReference type="ProteomicsDB" id="66115">
    <molecule id="Q68DY1-1"/>
</dbReference>
<dbReference type="ProteomicsDB" id="66116">
    <molecule id="Q68DY1-2"/>
</dbReference>
<dbReference type="ProteomicsDB" id="66117">
    <molecule id="Q68DY1-3"/>
</dbReference>
<dbReference type="Antibodypedia" id="56812">
    <property type="antibodies" value="30 antibodies from 8 providers"/>
</dbReference>
<dbReference type="DNASU" id="199777"/>
<dbReference type="Ensembl" id="ENST00000291750.6">
    <molecule id="Q68DY1-3"/>
    <property type="protein sequence ID" value="ENSP00000291750.6"/>
    <property type="gene ID" value="ENSG00000188171.17"/>
</dbReference>
<dbReference type="Ensembl" id="ENST00000601440.6">
    <molecule id="Q68DY1-1"/>
    <property type="protein sequence ID" value="ENSP00000469958.1"/>
    <property type="gene ID" value="ENSG00000188171.17"/>
</dbReference>
<dbReference type="GeneID" id="199777"/>
<dbReference type="KEGG" id="hsa:199777"/>
<dbReference type="MANE-Select" id="ENST00000601440.6">
    <property type="protein sequence ID" value="ENSP00000469958.1"/>
    <property type="RefSeq nucleotide sequence ID" value="NM_001076675.3"/>
    <property type="RefSeq protein sequence ID" value="NP_001070143.1"/>
</dbReference>
<dbReference type="UCSC" id="uc002npb.2">
    <molecule id="Q68DY1-1"/>
    <property type="organism name" value="human"/>
</dbReference>
<dbReference type="AGR" id="HGNC:30461"/>
<dbReference type="CTD" id="199777"/>
<dbReference type="DisGeNET" id="199777"/>
<dbReference type="GeneCards" id="ZNF626"/>
<dbReference type="HGNC" id="HGNC:30461">
    <property type="gene designation" value="ZNF626"/>
</dbReference>
<dbReference type="HPA" id="ENSG00000188171">
    <property type="expression patterns" value="Low tissue specificity"/>
</dbReference>
<dbReference type="neXtProt" id="NX_Q68DY1"/>
<dbReference type="OpenTargets" id="ENSG00000188171"/>
<dbReference type="PharmGKB" id="PA134875370"/>
<dbReference type="VEuPathDB" id="HostDB:ENSG00000188171"/>
<dbReference type="eggNOG" id="KOG1721">
    <property type="taxonomic scope" value="Eukaryota"/>
</dbReference>
<dbReference type="GeneTree" id="ENSGT01130000278311"/>
<dbReference type="HOGENOM" id="CLU_002678_44_0_1"/>
<dbReference type="InParanoid" id="Q68DY1"/>
<dbReference type="OrthoDB" id="9411774at2759"/>
<dbReference type="PAN-GO" id="Q68DY1">
    <property type="GO annotations" value="3 GO annotations based on evolutionary models"/>
</dbReference>
<dbReference type="PhylomeDB" id="Q68DY1"/>
<dbReference type="TreeFam" id="TF342117"/>
<dbReference type="PathwayCommons" id="Q68DY1"/>
<dbReference type="Reactome" id="R-HSA-212436">
    <property type="pathway name" value="Generic Transcription Pathway"/>
</dbReference>
<dbReference type="SignaLink" id="Q68DY1"/>
<dbReference type="BioGRID-ORCS" id="199777">
    <property type="hits" value="22 hits in 1106 CRISPR screens"/>
</dbReference>
<dbReference type="ChiTaRS" id="ZNF626">
    <property type="organism name" value="human"/>
</dbReference>
<dbReference type="GenomeRNAi" id="199777"/>
<dbReference type="Pharos" id="Q68DY1">
    <property type="development level" value="Tdark"/>
</dbReference>
<dbReference type="PRO" id="PR:Q68DY1"/>
<dbReference type="Proteomes" id="UP000005640">
    <property type="component" value="Chromosome 19"/>
</dbReference>
<dbReference type="RNAct" id="Q68DY1">
    <property type="molecule type" value="protein"/>
</dbReference>
<dbReference type="Bgee" id="ENSG00000188171">
    <property type="expression patterns" value="Expressed in buccal mucosa cell and 167 other cell types or tissues"/>
</dbReference>
<dbReference type="ExpressionAtlas" id="Q68DY1">
    <property type="expression patterns" value="baseline and differential"/>
</dbReference>
<dbReference type="GO" id="GO:0005634">
    <property type="term" value="C:nucleus"/>
    <property type="evidence" value="ECO:0007669"/>
    <property type="project" value="UniProtKB-SubCell"/>
</dbReference>
<dbReference type="GO" id="GO:0000981">
    <property type="term" value="F:DNA-binding transcription factor activity, RNA polymerase II-specific"/>
    <property type="evidence" value="ECO:0000318"/>
    <property type="project" value="GO_Central"/>
</dbReference>
<dbReference type="GO" id="GO:0000978">
    <property type="term" value="F:RNA polymerase II cis-regulatory region sequence-specific DNA binding"/>
    <property type="evidence" value="ECO:0000318"/>
    <property type="project" value="GO_Central"/>
</dbReference>
<dbReference type="GO" id="GO:0008270">
    <property type="term" value="F:zinc ion binding"/>
    <property type="evidence" value="ECO:0007669"/>
    <property type="project" value="UniProtKB-KW"/>
</dbReference>
<dbReference type="GO" id="GO:0006355">
    <property type="term" value="P:regulation of DNA-templated transcription"/>
    <property type="evidence" value="ECO:0000318"/>
    <property type="project" value="GO_Central"/>
</dbReference>
<dbReference type="CDD" id="cd07765">
    <property type="entry name" value="KRAB_A-box"/>
    <property type="match status" value="1"/>
</dbReference>
<dbReference type="FunFam" id="3.30.160.60:FF:000034">
    <property type="entry name" value="zinc finger protein 25"/>
    <property type="match status" value="1"/>
</dbReference>
<dbReference type="FunFam" id="3.30.160.60:FF:000016">
    <property type="entry name" value="zinc finger protein 37 homolog"/>
    <property type="match status" value="1"/>
</dbReference>
<dbReference type="FunFam" id="3.30.160.60:FF:000120">
    <property type="entry name" value="Zinc finger protein 430"/>
    <property type="match status" value="4"/>
</dbReference>
<dbReference type="FunFam" id="3.30.160.60:FF:000362">
    <property type="entry name" value="Zinc finger protein 606"/>
    <property type="match status" value="3"/>
</dbReference>
<dbReference type="FunFam" id="3.30.160.60:FF:000176">
    <property type="entry name" value="zinc finger protein 70"/>
    <property type="match status" value="1"/>
</dbReference>
<dbReference type="FunFam" id="3.30.160.60:FF:001435">
    <property type="entry name" value="zinc finger protein 777"/>
    <property type="match status" value="1"/>
</dbReference>
<dbReference type="FunFam" id="3.30.160.60:FF:000416">
    <property type="entry name" value="zinc finger protein 879 isoform X1"/>
    <property type="match status" value="1"/>
</dbReference>
<dbReference type="Gene3D" id="6.10.140.140">
    <property type="match status" value="1"/>
</dbReference>
<dbReference type="Gene3D" id="3.30.160.60">
    <property type="entry name" value="Classic Zinc Finger"/>
    <property type="match status" value="12"/>
</dbReference>
<dbReference type="InterPro" id="IPR050636">
    <property type="entry name" value="C2H2-ZF_domain-containing"/>
</dbReference>
<dbReference type="InterPro" id="IPR001909">
    <property type="entry name" value="KRAB"/>
</dbReference>
<dbReference type="InterPro" id="IPR036051">
    <property type="entry name" value="KRAB_dom_sf"/>
</dbReference>
<dbReference type="InterPro" id="IPR036236">
    <property type="entry name" value="Znf_C2H2_sf"/>
</dbReference>
<dbReference type="InterPro" id="IPR013087">
    <property type="entry name" value="Znf_C2H2_type"/>
</dbReference>
<dbReference type="PANTHER" id="PTHR47772:SF15">
    <property type="entry name" value="REDUCED EXPRESSION 2-RELATED"/>
    <property type="match status" value="1"/>
</dbReference>
<dbReference type="PANTHER" id="PTHR47772">
    <property type="entry name" value="ZINC FINGER PROTEIN 200"/>
    <property type="match status" value="1"/>
</dbReference>
<dbReference type="Pfam" id="PF01352">
    <property type="entry name" value="KRAB"/>
    <property type="match status" value="1"/>
</dbReference>
<dbReference type="Pfam" id="PF00096">
    <property type="entry name" value="zf-C2H2"/>
    <property type="match status" value="12"/>
</dbReference>
<dbReference type="SMART" id="SM00349">
    <property type="entry name" value="KRAB"/>
    <property type="match status" value="1"/>
</dbReference>
<dbReference type="SMART" id="SM00355">
    <property type="entry name" value="ZnF_C2H2"/>
    <property type="match status" value="12"/>
</dbReference>
<dbReference type="SUPFAM" id="SSF57667">
    <property type="entry name" value="beta-beta-alpha zinc fingers"/>
    <property type="match status" value="7"/>
</dbReference>
<dbReference type="SUPFAM" id="SSF109640">
    <property type="entry name" value="KRAB domain (Kruppel-associated box)"/>
    <property type="match status" value="1"/>
</dbReference>
<dbReference type="PROSITE" id="PS50805">
    <property type="entry name" value="KRAB"/>
    <property type="match status" value="1"/>
</dbReference>
<dbReference type="PROSITE" id="PS00028">
    <property type="entry name" value="ZINC_FINGER_C2H2_1"/>
    <property type="match status" value="10"/>
</dbReference>
<dbReference type="PROSITE" id="PS50157">
    <property type="entry name" value="ZINC_FINGER_C2H2_2"/>
    <property type="match status" value="12"/>
</dbReference>
<protein>
    <recommendedName>
        <fullName>Zinc finger protein 626</fullName>
    </recommendedName>
</protein>
<keyword id="KW-0025">Alternative splicing</keyword>
<keyword id="KW-0238">DNA-binding</keyword>
<keyword id="KW-0479">Metal-binding</keyword>
<keyword id="KW-0539">Nucleus</keyword>
<keyword id="KW-1185">Reference proteome</keyword>
<keyword id="KW-0677">Repeat</keyword>
<keyword id="KW-0804">Transcription</keyword>
<keyword id="KW-0805">Transcription regulation</keyword>
<keyword id="KW-0862">Zinc</keyword>
<keyword id="KW-0863">Zinc-finger</keyword>